<name>QUEC_GLOVI</name>
<dbReference type="EC" id="6.3.4.20" evidence="1"/>
<dbReference type="EMBL" id="BA000045">
    <property type="protein sequence ID" value="BAC90978.1"/>
    <property type="molecule type" value="Genomic_DNA"/>
</dbReference>
<dbReference type="RefSeq" id="NP_925983.1">
    <property type="nucleotide sequence ID" value="NC_005125.1"/>
</dbReference>
<dbReference type="SMR" id="Q7NCE2"/>
<dbReference type="STRING" id="251221.gene:10760542"/>
<dbReference type="EnsemblBacteria" id="BAC90978">
    <property type="protein sequence ID" value="BAC90978"/>
    <property type="gene ID" value="BAC90978"/>
</dbReference>
<dbReference type="KEGG" id="gvi:gll3037"/>
<dbReference type="PATRIC" id="fig|251221.4.peg.3067"/>
<dbReference type="eggNOG" id="COG0603">
    <property type="taxonomic scope" value="Bacteria"/>
</dbReference>
<dbReference type="HOGENOM" id="CLU_081854_0_0_3"/>
<dbReference type="InParanoid" id="Q7NCE2"/>
<dbReference type="OrthoDB" id="9789567at2"/>
<dbReference type="PhylomeDB" id="Q7NCE2"/>
<dbReference type="UniPathway" id="UPA00391"/>
<dbReference type="Proteomes" id="UP000000557">
    <property type="component" value="Chromosome"/>
</dbReference>
<dbReference type="GO" id="GO:0005524">
    <property type="term" value="F:ATP binding"/>
    <property type="evidence" value="ECO:0007669"/>
    <property type="project" value="UniProtKB-UniRule"/>
</dbReference>
<dbReference type="GO" id="GO:0016879">
    <property type="term" value="F:ligase activity, forming carbon-nitrogen bonds"/>
    <property type="evidence" value="ECO:0007669"/>
    <property type="project" value="UniProtKB-UniRule"/>
</dbReference>
<dbReference type="GO" id="GO:0008270">
    <property type="term" value="F:zinc ion binding"/>
    <property type="evidence" value="ECO:0007669"/>
    <property type="project" value="UniProtKB-UniRule"/>
</dbReference>
<dbReference type="GO" id="GO:0008616">
    <property type="term" value="P:queuosine biosynthetic process"/>
    <property type="evidence" value="ECO:0007669"/>
    <property type="project" value="UniProtKB-UniRule"/>
</dbReference>
<dbReference type="CDD" id="cd01995">
    <property type="entry name" value="QueC-like"/>
    <property type="match status" value="1"/>
</dbReference>
<dbReference type="Gene3D" id="3.40.50.620">
    <property type="entry name" value="HUPs"/>
    <property type="match status" value="1"/>
</dbReference>
<dbReference type="HAMAP" id="MF_01633">
    <property type="entry name" value="QueC"/>
    <property type="match status" value="1"/>
</dbReference>
<dbReference type="InterPro" id="IPR018317">
    <property type="entry name" value="QueC"/>
</dbReference>
<dbReference type="InterPro" id="IPR014729">
    <property type="entry name" value="Rossmann-like_a/b/a_fold"/>
</dbReference>
<dbReference type="NCBIfam" id="TIGR00364">
    <property type="entry name" value="7-cyano-7-deazaguanine synthase QueC"/>
    <property type="match status" value="1"/>
</dbReference>
<dbReference type="PANTHER" id="PTHR42914">
    <property type="entry name" value="7-CYANO-7-DEAZAGUANINE SYNTHASE"/>
    <property type="match status" value="1"/>
</dbReference>
<dbReference type="PANTHER" id="PTHR42914:SF1">
    <property type="entry name" value="7-CYANO-7-DEAZAGUANINE SYNTHASE"/>
    <property type="match status" value="1"/>
</dbReference>
<dbReference type="Pfam" id="PF06508">
    <property type="entry name" value="QueC"/>
    <property type="match status" value="1"/>
</dbReference>
<dbReference type="PIRSF" id="PIRSF006293">
    <property type="entry name" value="ExsB"/>
    <property type="match status" value="1"/>
</dbReference>
<dbReference type="SUPFAM" id="SSF52402">
    <property type="entry name" value="Adenine nucleotide alpha hydrolases-like"/>
    <property type="match status" value="1"/>
</dbReference>
<sequence length="234" mass="25272">MKKALVVFSGGQDSTTCAALACREYDEVHAVTFEYNQRHAIELESARAVGQALGLTGHEFIRLGPLLKGTSPLVSDAPLGQYASAAELPAGVEPTFVPGRNILFLTLAANRAFCLGTGDIVIGVCEADFAGYWDCRQVFVEAMARALGEGIYGDANAIRIHTPLMRLTKAETVKLSVEVLGERFEEVLALSHTCYAGVRGGCGRCHACILRDRGFREAGVPDPIWKFRKEPVSL</sequence>
<proteinExistence type="inferred from homology"/>
<feature type="chain" id="PRO_0000246847" description="7-cyano-7-deazaguanine synthase">
    <location>
        <begin position="1"/>
        <end position="234"/>
    </location>
</feature>
<feature type="binding site" evidence="1">
    <location>
        <begin position="8"/>
        <end position="18"/>
    </location>
    <ligand>
        <name>ATP</name>
        <dbReference type="ChEBI" id="CHEBI:30616"/>
    </ligand>
</feature>
<feature type="binding site" evidence="1">
    <location>
        <position position="194"/>
    </location>
    <ligand>
        <name>Zn(2+)</name>
        <dbReference type="ChEBI" id="CHEBI:29105"/>
    </ligand>
</feature>
<feature type="binding site" evidence="1">
    <location>
        <position position="202"/>
    </location>
    <ligand>
        <name>Zn(2+)</name>
        <dbReference type="ChEBI" id="CHEBI:29105"/>
    </ligand>
</feature>
<feature type="binding site" evidence="1">
    <location>
        <position position="205"/>
    </location>
    <ligand>
        <name>Zn(2+)</name>
        <dbReference type="ChEBI" id="CHEBI:29105"/>
    </ligand>
</feature>
<feature type="binding site" evidence="1">
    <location>
        <position position="208"/>
    </location>
    <ligand>
        <name>Zn(2+)</name>
        <dbReference type="ChEBI" id="CHEBI:29105"/>
    </ligand>
</feature>
<evidence type="ECO:0000255" key="1">
    <source>
        <dbReference type="HAMAP-Rule" id="MF_01633"/>
    </source>
</evidence>
<gene>
    <name evidence="1" type="primary">queC</name>
    <name type="ordered locus">gll3037</name>
</gene>
<reference key="1">
    <citation type="journal article" date="2003" name="DNA Res.">
        <title>Complete genome structure of Gloeobacter violaceus PCC 7421, a cyanobacterium that lacks thylakoids.</title>
        <authorList>
            <person name="Nakamura Y."/>
            <person name="Kaneko T."/>
            <person name="Sato S."/>
            <person name="Mimuro M."/>
            <person name="Miyashita H."/>
            <person name="Tsuchiya T."/>
            <person name="Sasamoto S."/>
            <person name="Watanabe A."/>
            <person name="Kawashima K."/>
            <person name="Kishida Y."/>
            <person name="Kiyokawa C."/>
            <person name="Kohara M."/>
            <person name="Matsumoto M."/>
            <person name="Matsuno A."/>
            <person name="Nakazaki N."/>
            <person name="Shimpo S."/>
            <person name="Takeuchi C."/>
            <person name="Yamada M."/>
            <person name="Tabata S."/>
        </authorList>
    </citation>
    <scope>NUCLEOTIDE SEQUENCE [LARGE SCALE GENOMIC DNA]</scope>
    <source>
        <strain>ATCC 29082 / PCC 7421</strain>
    </source>
</reference>
<organism>
    <name type="scientific">Gloeobacter violaceus (strain ATCC 29082 / PCC 7421)</name>
    <dbReference type="NCBI Taxonomy" id="251221"/>
    <lineage>
        <taxon>Bacteria</taxon>
        <taxon>Bacillati</taxon>
        <taxon>Cyanobacteriota</taxon>
        <taxon>Cyanophyceae</taxon>
        <taxon>Gloeobacterales</taxon>
        <taxon>Gloeobacteraceae</taxon>
        <taxon>Gloeobacter</taxon>
    </lineage>
</organism>
<keyword id="KW-0067">ATP-binding</keyword>
<keyword id="KW-0436">Ligase</keyword>
<keyword id="KW-0479">Metal-binding</keyword>
<keyword id="KW-0547">Nucleotide-binding</keyword>
<keyword id="KW-0671">Queuosine biosynthesis</keyword>
<keyword id="KW-1185">Reference proteome</keyword>
<keyword id="KW-0862">Zinc</keyword>
<accession>Q7NCE2</accession>
<comment type="function">
    <text evidence="1">Catalyzes the ATP-dependent conversion of 7-carboxy-7-deazaguanine (CDG) to 7-cyano-7-deazaguanine (preQ(0)).</text>
</comment>
<comment type="catalytic activity">
    <reaction evidence="1">
        <text>7-carboxy-7-deazaguanine + NH4(+) + ATP = 7-cyano-7-deazaguanine + ADP + phosphate + H2O + H(+)</text>
        <dbReference type="Rhea" id="RHEA:27982"/>
        <dbReference type="ChEBI" id="CHEBI:15377"/>
        <dbReference type="ChEBI" id="CHEBI:15378"/>
        <dbReference type="ChEBI" id="CHEBI:28938"/>
        <dbReference type="ChEBI" id="CHEBI:30616"/>
        <dbReference type="ChEBI" id="CHEBI:43474"/>
        <dbReference type="ChEBI" id="CHEBI:45075"/>
        <dbReference type="ChEBI" id="CHEBI:61036"/>
        <dbReference type="ChEBI" id="CHEBI:456216"/>
        <dbReference type="EC" id="6.3.4.20"/>
    </reaction>
</comment>
<comment type="cofactor">
    <cofactor evidence="1">
        <name>Zn(2+)</name>
        <dbReference type="ChEBI" id="CHEBI:29105"/>
    </cofactor>
    <text evidence="1">Binds 1 zinc ion per subunit.</text>
</comment>
<comment type="pathway">
    <text evidence="1">Purine metabolism; 7-cyano-7-deazaguanine biosynthesis.</text>
</comment>
<comment type="similarity">
    <text evidence="1">Belongs to the QueC family.</text>
</comment>
<protein>
    <recommendedName>
        <fullName evidence="1">7-cyano-7-deazaguanine synthase</fullName>
        <ecNumber evidence="1">6.3.4.20</ecNumber>
    </recommendedName>
    <alternativeName>
        <fullName evidence="1">7-cyano-7-carbaguanine synthase</fullName>
    </alternativeName>
    <alternativeName>
        <fullName evidence="1">PreQ(0) synthase</fullName>
    </alternativeName>
    <alternativeName>
        <fullName evidence="1">Queuosine biosynthesis protein QueC</fullName>
    </alternativeName>
</protein>